<organism>
    <name type="scientific">Homo sapiens</name>
    <name type="common">Human</name>
    <dbReference type="NCBI Taxonomy" id="9606"/>
    <lineage>
        <taxon>Eukaryota</taxon>
        <taxon>Metazoa</taxon>
        <taxon>Chordata</taxon>
        <taxon>Craniata</taxon>
        <taxon>Vertebrata</taxon>
        <taxon>Euteleostomi</taxon>
        <taxon>Mammalia</taxon>
        <taxon>Eutheria</taxon>
        <taxon>Euarchontoglires</taxon>
        <taxon>Primates</taxon>
        <taxon>Haplorrhini</taxon>
        <taxon>Catarrhini</taxon>
        <taxon>Hominidae</taxon>
        <taxon>Homo</taxon>
    </lineage>
</organism>
<gene>
    <name evidence="21" type="primary">USP36</name>
    <name type="synonym">KIAA1453</name>
</gene>
<proteinExistence type="evidence at protein level"/>
<protein>
    <recommendedName>
        <fullName evidence="20">Ubiquitin carboxyl-terminal hydrolase 36</fullName>
        <ecNumber evidence="18">2.3.2.-</ecNumber>
        <ecNumber evidence="7 17">3.4.19.12</ecNumber>
    </recommendedName>
    <alternativeName>
        <fullName evidence="19">Deubiquitinating enzyme 36</fullName>
    </alternativeName>
    <alternativeName>
        <fullName>Ubiquitin thioesterase 36</fullName>
    </alternativeName>
    <alternativeName>
        <fullName>Ubiquitin-specific-processing protease 36</fullName>
    </alternativeName>
</protein>
<dbReference type="EC" id="2.3.2.-" evidence="18"/>
<dbReference type="EC" id="3.4.19.12" evidence="7 17"/>
<dbReference type="EMBL" id="AB040886">
    <property type="protein sequence ID" value="BAA95977.1"/>
    <property type="status" value="ALT_INIT"/>
    <property type="molecule type" value="mRNA"/>
</dbReference>
<dbReference type="EMBL" id="BC016487">
    <property type="protein sequence ID" value="AAH16487.1"/>
    <property type="status" value="ALT_SEQ"/>
    <property type="molecule type" value="mRNA"/>
</dbReference>
<dbReference type="EMBL" id="BC027992">
    <property type="protein sequence ID" value="AAH27992.1"/>
    <property type="molecule type" value="mRNA"/>
</dbReference>
<dbReference type="EMBL" id="BC071582">
    <property type="protein sequence ID" value="AAH71582.1"/>
    <property type="molecule type" value="mRNA"/>
</dbReference>
<dbReference type="EMBL" id="AK001671">
    <property type="protein sequence ID" value="BAA91825.1"/>
    <property type="molecule type" value="mRNA"/>
</dbReference>
<dbReference type="EMBL" id="AL833835">
    <property type="protein sequence ID" value="CAD38695.1"/>
    <property type="molecule type" value="mRNA"/>
</dbReference>
<dbReference type="CCDS" id="CCDS32755.1"/>
<dbReference type="RefSeq" id="NP_001308220.1">
    <property type="nucleotide sequence ID" value="NM_001321291.2"/>
</dbReference>
<dbReference type="RefSeq" id="NP_001372099.1">
    <property type="nucleotide sequence ID" value="NM_001385170.1"/>
</dbReference>
<dbReference type="RefSeq" id="NP_001372100.1">
    <property type="nucleotide sequence ID" value="NM_001385171.1"/>
</dbReference>
<dbReference type="RefSeq" id="NP_001372101.1">
    <property type="nucleotide sequence ID" value="NM_001385172.1"/>
</dbReference>
<dbReference type="RefSeq" id="NP_001372102.1">
    <property type="nucleotide sequence ID" value="NM_001385173.1"/>
</dbReference>
<dbReference type="RefSeq" id="NP_001372103.1">
    <property type="nucleotide sequence ID" value="NM_001385174.1"/>
</dbReference>
<dbReference type="RefSeq" id="NP_001372104.1">
    <property type="nucleotide sequence ID" value="NM_001385175.1"/>
</dbReference>
<dbReference type="RefSeq" id="NP_001372105.1">
    <property type="nucleotide sequence ID" value="NM_001385176.1"/>
</dbReference>
<dbReference type="RefSeq" id="XP_005257599.1">
    <property type="nucleotide sequence ID" value="XM_005257542.2"/>
</dbReference>
<dbReference type="RefSeq" id="XP_005257600.1">
    <property type="nucleotide sequence ID" value="XM_005257543.2"/>
</dbReference>
<dbReference type="RefSeq" id="XP_016880389.1">
    <property type="nucleotide sequence ID" value="XM_017024900.1"/>
</dbReference>
<dbReference type="RefSeq" id="XP_047292425.1">
    <property type="nucleotide sequence ID" value="XM_047436469.1"/>
</dbReference>
<dbReference type="RefSeq" id="XP_047292426.1">
    <property type="nucleotide sequence ID" value="XM_047436470.1"/>
</dbReference>
<dbReference type="PDB" id="8BS3">
    <property type="method" value="X-ray"/>
    <property type="resolution" value="2.20 A"/>
    <property type="chains" value="A=80-461"/>
</dbReference>
<dbReference type="PDB" id="8BS9">
    <property type="method" value="X-ray"/>
    <property type="resolution" value="1.90 A"/>
    <property type="chains" value="A/C=80-424"/>
</dbReference>
<dbReference type="PDBsum" id="8BS3"/>
<dbReference type="PDBsum" id="8BS9"/>
<dbReference type="SMR" id="Q9P275"/>
<dbReference type="BioGRID" id="121651">
    <property type="interactions" value="606"/>
</dbReference>
<dbReference type="FunCoup" id="Q9P275">
    <property type="interactions" value="3773"/>
</dbReference>
<dbReference type="IntAct" id="Q9P275">
    <property type="interactions" value="82"/>
</dbReference>
<dbReference type="MINT" id="Q9P275"/>
<dbReference type="STRING" id="9606.ENSP00000441214"/>
<dbReference type="BindingDB" id="Q9P275"/>
<dbReference type="ChEMBL" id="CHEMBL4630861"/>
<dbReference type="MEROPS" id="C19.042"/>
<dbReference type="CarbonylDB" id="Q9P275"/>
<dbReference type="GlyGen" id="Q9P275">
    <property type="glycosylation" value="1 site, 1 N-linked glycan (1 site)"/>
</dbReference>
<dbReference type="iPTMnet" id="Q9P275"/>
<dbReference type="PhosphoSitePlus" id="Q9P275"/>
<dbReference type="SwissPalm" id="Q9P275"/>
<dbReference type="BioMuta" id="USP36"/>
<dbReference type="DMDM" id="124056592"/>
<dbReference type="jPOST" id="Q9P275"/>
<dbReference type="MassIVE" id="Q9P275"/>
<dbReference type="PaxDb" id="9606-ENSP00000441214"/>
<dbReference type="PeptideAtlas" id="Q9P275"/>
<dbReference type="Pumba" id="Q9P275"/>
<dbReference type="Antibodypedia" id="1709">
    <property type="antibodies" value="255 antibodies from 29 providers"/>
</dbReference>
<dbReference type="DNASU" id="57602"/>
<dbReference type="Ensembl" id="ENST00000312010.10">
    <property type="protein sequence ID" value="ENSP00000310590.6"/>
    <property type="gene ID" value="ENSG00000055483.20"/>
</dbReference>
<dbReference type="Ensembl" id="ENST00000449938.7">
    <property type="protein sequence ID" value="ENSP00000401119.4"/>
    <property type="gene ID" value="ENSG00000055483.20"/>
</dbReference>
<dbReference type="Ensembl" id="ENST00000542802.7">
    <property type="protein sequence ID" value="ENSP00000441214.1"/>
    <property type="gene ID" value="ENSG00000055483.20"/>
</dbReference>
<dbReference type="Ensembl" id="ENST00000589225.5">
    <property type="protein sequence ID" value="ENSP00000467280.1"/>
    <property type="gene ID" value="ENSG00000055483.20"/>
</dbReference>
<dbReference type="Ensembl" id="ENST00000592231.6">
    <property type="protein sequence ID" value="ENSP00000465698.2"/>
    <property type="gene ID" value="ENSG00000055483.20"/>
</dbReference>
<dbReference type="GeneID" id="57602"/>
<dbReference type="KEGG" id="hsa:57602"/>
<dbReference type="MANE-Select" id="ENST00000449938.7">
    <property type="protein sequence ID" value="ENSP00000401119.4"/>
    <property type="RefSeq nucleotide sequence ID" value="NM_001385174.1"/>
    <property type="RefSeq protein sequence ID" value="NP_001372103.1"/>
</dbReference>
<dbReference type="UCSC" id="uc002jvz.2">
    <property type="organism name" value="human"/>
</dbReference>
<dbReference type="AGR" id="HGNC:20062"/>
<dbReference type="CTD" id="57602"/>
<dbReference type="DisGeNET" id="57602"/>
<dbReference type="GeneCards" id="USP36"/>
<dbReference type="HGNC" id="HGNC:20062">
    <property type="gene designation" value="USP36"/>
</dbReference>
<dbReference type="HPA" id="ENSG00000055483">
    <property type="expression patterns" value="Low tissue specificity"/>
</dbReference>
<dbReference type="MIM" id="612543">
    <property type="type" value="gene"/>
</dbReference>
<dbReference type="neXtProt" id="NX_Q9P275"/>
<dbReference type="OpenTargets" id="ENSG00000055483"/>
<dbReference type="PharmGKB" id="PA134949090"/>
<dbReference type="VEuPathDB" id="HostDB:ENSG00000055483"/>
<dbReference type="eggNOG" id="KOG1865">
    <property type="taxonomic scope" value="Eukaryota"/>
</dbReference>
<dbReference type="GeneTree" id="ENSGT00940000157948"/>
<dbReference type="InParanoid" id="Q9P275"/>
<dbReference type="OMA" id="STWPVSK"/>
<dbReference type="OrthoDB" id="420187at2759"/>
<dbReference type="PAN-GO" id="Q9P275">
    <property type="GO annotations" value="6 GO annotations based on evolutionary models"/>
</dbReference>
<dbReference type="PhylomeDB" id="Q9P275"/>
<dbReference type="TreeFam" id="TF315281"/>
<dbReference type="PathwayCommons" id="Q9P275"/>
<dbReference type="SignaLink" id="Q9P275"/>
<dbReference type="SIGNOR" id="Q9P275"/>
<dbReference type="BioGRID-ORCS" id="57602">
    <property type="hits" value="573 hits in 1173 CRISPR screens"/>
</dbReference>
<dbReference type="CD-CODE" id="91857CE7">
    <property type="entry name" value="Nucleolus"/>
</dbReference>
<dbReference type="ChiTaRS" id="USP36">
    <property type="organism name" value="human"/>
</dbReference>
<dbReference type="GeneWiki" id="USP36"/>
<dbReference type="GenomeRNAi" id="57602"/>
<dbReference type="Pharos" id="Q9P275">
    <property type="development level" value="Tbio"/>
</dbReference>
<dbReference type="PRO" id="PR:Q9P275"/>
<dbReference type="Proteomes" id="UP000005640">
    <property type="component" value="Chromosome 17"/>
</dbReference>
<dbReference type="RNAct" id="Q9P275">
    <property type="molecule type" value="protein"/>
</dbReference>
<dbReference type="Bgee" id="ENSG00000055483">
    <property type="expression patterns" value="Expressed in sural nerve and 182 other cell types or tissues"/>
</dbReference>
<dbReference type="ExpressionAtlas" id="Q9P275">
    <property type="expression patterns" value="baseline and differential"/>
</dbReference>
<dbReference type="GO" id="GO:0005737">
    <property type="term" value="C:cytoplasm"/>
    <property type="evidence" value="ECO:0000314"/>
    <property type="project" value="UniProtKB"/>
</dbReference>
<dbReference type="GO" id="GO:0005829">
    <property type="term" value="C:cytosol"/>
    <property type="evidence" value="ECO:0000318"/>
    <property type="project" value="GO_Central"/>
</dbReference>
<dbReference type="GO" id="GO:0016607">
    <property type="term" value="C:nuclear speck"/>
    <property type="evidence" value="ECO:0000314"/>
    <property type="project" value="HPA"/>
</dbReference>
<dbReference type="GO" id="GO:0005730">
    <property type="term" value="C:nucleolus"/>
    <property type="evidence" value="ECO:0000314"/>
    <property type="project" value="UniProtKB"/>
</dbReference>
<dbReference type="GO" id="GO:0005654">
    <property type="term" value="C:nucleoplasm"/>
    <property type="evidence" value="ECO:0000314"/>
    <property type="project" value="HPA"/>
</dbReference>
<dbReference type="GO" id="GO:0005634">
    <property type="term" value="C:nucleus"/>
    <property type="evidence" value="ECO:0000318"/>
    <property type="project" value="GO_Central"/>
</dbReference>
<dbReference type="GO" id="GO:0004843">
    <property type="term" value="F:cysteine-type deubiquitinase activity"/>
    <property type="evidence" value="ECO:0000314"/>
    <property type="project" value="FlyBase"/>
</dbReference>
<dbReference type="GO" id="GO:0140936">
    <property type="term" value="F:histone H2B deubiquitinase activity"/>
    <property type="evidence" value="ECO:0000315"/>
    <property type="project" value="UniProtKB"/>
</dbReference>
<dbReference type="GO" id="GO:1990380">
    <property type="term" value="F:K48-linked deubiquitinase activity"/>
    <property type="evidence" value="ECO:0000314"/>
    <property type="project" value="UniProtKB"/>
</dbReference>
<dbReference type="GO" id="GO:0003723">
    <property type="term" value="F:RNA binding"/>
    <property type="evidence" value="ECO:0007005"/>
    <property type="project" value="UniProtKB"/>
</dbReference>
<dbReference type="GO" id="GO:0016740">
    <property type="term" value="F:transferase activity"/>
    <property type="evidence" value="ECO:0007669"/>
    <property type="project" value="UniProtKB-KW"/>
</dbReference>
<dbReference type="GO" id="GO:0006325">
    <property type="term" value="P:chromatin organization"/>
    <property type="evidence" value="ECO:0000315"/>
    <property type="project" value="UniProtKB"/>
</dbReference>
<dbReference type="GO" id="GO:0016242">
    <property type="term" value="P:negative regulation of macroautophagy"/>
    <property type="evidence" value="ECO:0000315"/>
    <property type="project" value="UniProtKB"/>
</dbReference>
<dbReference type="GO" id="GO:0007000">
    <property type="term" value="P:nucleolus organization"/>
    <property type="evidence" value="ECO:0000250"/>
    <property type="project" value="UniProtKB"/>
</dbReference>
<dbReference type="GO" id="GO:1903955">
    <property type="term" value="P:positive regulation of protein targeting to mitochondrion"/>
    <property type="evidence" value="ECO:0007001"/>
    <property type="project" value="ParkinsonsUK-UCL"/>
</dbReference>
<dbReference type="GO" id="GO:0016579">
    <property type="term" value="P:protein deubiquitination"/>
    <property type="evidence" value="ECO:0000314"/>
    <property type="project" value="UniProtKB"/>
</dbReference>
<dbReference type="GO" id="GO:0050821">
    <property type="term" value="P:protein stabilization"/>
    <property type="evidence" value="ECO:0000250"/>
    <property type="project" value="UniProtKB"/>
</dbReference>
<dbReference type="GO" id="GO:0006508">
    <property type="term" value="P:proteolysis"/>
    <property type="evidence" value="ECO:0007669"/>
    <property type="project" value="UniProtKB-KW"/>
</dbReference>
<dbReference type="GO" id="GO:0042981">
    <property type="term" value="P:regulation of apoptotic process"/>
    <property type="evidence" value="ECO:0000318"/>
    <property type="project" value="GO_Central"/>
</dbReference>
<dbReference type="GO" id="GO:1901524">
    <property type="term" value="P:regulation of mitophagy"/>
    <property type="evidence" value="ECO:0007001"/>
    <property type="project" value="ParkinsonsUK-UCL"/>
</dbReference>
<dbReference type="GO" id="GO:0031647">
    <property type="term" value="P:regulation of protein stability"/>
    <property type="evidence" value="ECO:0000315"/>
    <property type="project" value="UniProtKB"/>
</dbReference>
<dbReference type="GO" id="GO:2000232">
    <property type="term" value="P:regulation of rRNA processing"/>
    <property type="evidence" value="ECO:0000314"/>
    <property type="project" value="UniProtKB"/>
</dbReference>
<dbReference type="CDD" id="cd02661">
    <property type="entry name" value="Peptidase_C19E"/>
    <property type="match status" value="1"/>
</dbReference>
<dbReference type="FunFam" id="3.90.70.10:FF:000016">
    <property type="entry name" value="Ubiquitin carboxyl-terminal hydrolase 36"/>
    <property type="match status" value="1"/>
</dbReference>
<dbReference type="Gene3D" id="3.90.70.10">
    <property type="entry name" value="Cysteine proteinases"/>
    <property type="match status" value="1"/>
</dbReference>
<dbReference type="InterPro" id="IPR038765">
    <property type="entry name" value="Papain-like_cys_pep_sf"/>
</dbReference>
<dbReference type="InterPro" id="IPR050164">
    <property type="entry name" value="Peptidase_C19"/>
</dbReference>
<dbReference type="InterPro" id="IPR001394">
    <property type="entry name" value="Peptidase_C19_UCH"/>
</dbReference>
<dbReference type="InterPro" id="IPR018200">
    <property type="entry name" value="USP_CS"/>
</dbReference>
<dbReference type="InterPro" id="IPR028889">
    <property type="entry name" value="USP_dom"/>
</dbReference>
<dbReference type="PANTHER" id="PTHR24006">
    <property type="entry name" value="UBIQUITIN CARBOXYL-TERMINAL HYDROLASE"/>
    <property type="match status" value="1"/>
</dbReference>
<dbReference type="PANTHER" id="PTHR24006:SF653">
    <property type="entry name" value="UBIQUITIN CARBOXYL-TERMINAL HYDROLASE 36"/>
    <property type="match status" value="1"/>
</dbReference>
<dbReference type="Pfam" id="PF00443">
    <property type="entry name" value="UCH"/>
    <property type="match status" value="1"/>
</dbReference>
<dbReference type="SUPFAM" id="SSF54001">
    <property type="entry name" value="Cysteine proteinases"/>
    <property type="match status" value="1"/>
</dbReference>
<dbReference type="PROSITE" id="PS00972">
    <property type="entry name" value="USP_1"/>
    <property type="match status" value="1"/>
</dbReference>
<dbReference type="PROSITE" id="PS00973">
    <property type="entry name" value="USP_2"/>
    <property type="match status" value="1"/>
</dbReference>
<dbReference type="PROSITE" id="PS50235">
    <property type="entry name" value="USP_3"/>
    <property type="match status" value="1"/>
</dbReference>
<name>UBP36_HUMAN</name>
<comment type="function">
    <text evidence="9 10 11 12 13 14 15 16 17 18">Deubiquitinase essential for the regulation of nucleolar structure and function (PubMed:19208757, PubMed:22902402, PubMed:29273634). Required for cell and organism viability (PubMed:19208757, PubMed:22902402, PubMed:29273634). Plays an important role in ribosomal RNA processing and protein synthesis, which is mediated, at least in part, through deubiquitination of DHX33, NPM1 and FBL, regulating their protein stability (PubMed:19208757, PubMed:22902402, PubMed:29273634, PubMed:36912080). Functions as a transcriptional repressor by deubiquiting histone H2B at the promoters of genes critical for cellular differentiation, such as CDKN1A, thereby preventing histone H3 'Lys-4' trimethylation (H3K4) (PubMed:29274341). Specifically deubiquitinates MYC in the nucleolus, leading to prevent MYC degradation by the proteasome: acts by specifically interacting with isoform 3 of FBXW7 (FBW7gamma) in the nucleolus and counteracting ubiquitination of MYC by the SCF(FBW7) complex (PubMed:25775507). In contrast, it does not interact with isoform 1 of FBXW7 (FBW7alpha) in the nucleoplasm (PubMed:25775507). Interacts to and regulates the actions of E3 ubiquitin-protein ligase NEDD4L over substrates such as NTRK1, KCNQ2 and KCNQ3, affecting their expression an functions (PubMed:27445338). Deubiquitinates SOD2, regulates SOD2 protein stability (PubMed:21268071). Deubiquitinase activity is required to control selective autophagy activation by ubiquitinated proteins (PubMed:22622177). Promotes CEP63 stabilization through 'Lys-48'-linked deubiquitination leading to increased stability (PubMed:35989368). Acts as a SUMO ligase to promote EXOSC10 sumoylation critical for the nucleolar RNA exosome function in rRNA processing (PubMed:36912080). Binds to pre-rRNAs (PubMed:36912080).</text>
</comment>
<comment type="catalytic activity">
    <reaction evidence="7 17">
        <text>Thiol-dependent hydrolysis of ester, thioester, amide, peptide and isopeptide bonds formed by the C-terminal Gly of ubiquitin (a 76-residue protein attached to proteins as an intracellular targeting signal).</text>
        <dbReference type="EC" id="3.4.19.12"/>
    </reaction>
</comment>
<comment type="subunit">
    <text evidence="13 14 18">Interacts with isoform 3 of FBXW7; the interaction inhibits MYC degradation induced by SCF(FBW7) complex (PubMed:25775507). Interacts with NTRK1; USP36 does not deubiquitinate NTRK1 (PubMed:27445338). Interacts with NEDD4L (via domains WW1, 3 and 4); the interaction inhibits ubiquitination of, at least, NTRK1, KCNQ2 and KCNQ3 by NEDD4L (PubMed:27445338). Interacts (via C-terminus) with EXOSC10 (via C-terminus); the interaction is facilitated by the association with RNA and promotes sumoylation of EXOSC10 (PubMed:36912080).</text>
</comment>
<comment type="interaction">
    <interactant intactId="EBI-2512419">
        <id>Q9P275</id>
    </interactant>
    <interactant intactId="EBI-2512405">
        <id>Q9H6R0</id>
        <label>DHX33</label>
    </interactant>
    <organismsDiffer>false</organismsDiffer>
    <experiments>5</experiments>
</comment>
<comment type="subcellular location">
    <subcellularLocation>
        <location evidence="5 9 13 14 18">Nucleus</location>
        <location evidence="5 9 13 14 18">Nucleolus</location>
    </subcellularLocation>
    <subcellularLocation>
        <location evidence="14">Cytoplasm</location>
    </subcellularLocation>
</comment>
<comment type="tissue specificity">
    <text evidence="7">Broadly expressed.</text>
</comment>
<comment type="induction">
    <text evidence="18">Down-regulated by ribosomal stress (at protein level).</text>
</comment>
<comment type="PTM">
    <text evidence="14">Polyubiquitinated by NEDD4L, no effect on USP36 protein levels. Both proteins interact with and regulate each other's ubiquitination levels.</text>
</comment>
<comment type="similarity">
    <text evidence="20">Belongs to the peptidase C19 family.</text>
</comment>
<comment type="sequence caution" evidence="20">
    <conflict type="miscellaneous discrepancy">
        <sequence resource="EMBL-CDS" id="AAH16487"/>
    </conflict>
    <text>Contaminating sequence. Potential poly-A sequence.</text>
</comment>
<comment type="sequence caution" evidence="20">
    <conflict type="erroneous initiation">
        <sequence resource="EMBL-CDS" id="BAA95977"/>
    </conflict>
    <text>Extended N-terminus.</text>
</comment>
<reference key="1">
    <citation type="journal article" date="2000" name="DNA Res.">
        <title>Prediction of the coding sequences of unidentified human genes. XVII. The complete sequences of 100 new cDNA clones from brain which code for large proteins in vitro.</title>
        <authorList>
            <person name="Nagase T."/>
            <person name="Kikuno R."/>
            <person name="Ishikawa K."/>
            <person name="Hirosawa M."/>
            <person name="Ohara O."/>
        </authorList>
    </citation>
    <scope>NUCLEOTIDE SEQUENCE [LARGE SCALE MRNA]</scope>
    <scope>VARIANTS ARG-806; CYS-828 AND 959-LYS-LYS-960 DEL</scope>
    <source>
        <tissue>Brain</tissue>
    </source>
</reference>
<reference key="2">
    <citation type="journal article" date="2004" name="Genome Res.">
        <title>The status, quality, and expansion of the NIH full-length cDNA project: the Mammalian Gene Collection (MGC).</title>
        <authorList>
            <consortium name="The MGC Project Team"/>
        </authorList>
    </citation>
    <scope>NUCLEOTIDE SEQUENCE [LARGE SCALE MRNA]</scope>
    <scope>VARIANTS ILE-271; ARG-806 AND PRO-887</scope>
    <source>
        <tissue>Cervix</tissue>
        <tissue>Placenta</tissue>
        <tissue>Skin</tissue>
    </source>
</reference>
<reference key="3">
    <citation type="journal article" date="2004" name="Nat. Genet.">
        <title>Complete sequencing and characterization of 21,243 full-length human cDNAs.</title>
        <authorList>
            <person name="Ota T."/>
            <person name="Suzuki Y."/>
            <person name="Nishikawa T."/>
            <person name="Otsuki T."/>
            <person name="Sugiyama T."/>
            <person name="Irie R."/>
            <person name="Wakamatsu A."/>
            <person name="Hayashi K."/>
            <person name="Sato H."/>
            <person name="Nagai K."/>
            <person name="Kimura K."/>
            <person name="Makita H."/>
            <person name="Sekine M."/>
            <person name="Obayashi M."/>
            <person name="Nishi T."/>
            <person name="Shibahara T."/>
            <person name="Tanaka T."/>
            <person name="Ishii S."/>
            <person name="Yamamoto J."/>
            <person name="Saito K."/>
            <person name="Kawai Y."/>
            <person name="Isono Y."/>
            <person name="Nakamura Y."/>
            <person name="Nagahari K."/>
            <person name="Murakami K."/>
            <person name="Yasuda T."/>
            <person name="Iwayanagi T."/>
            <person name="Wagatsuma M."/>
            <person name="Shiratori A."/>
            <person name="Sudo H."/>
            <person name="Hosoiri T."/>
            <person name="Kaku Y."/>
            <person name="Kodaira H."/>
            <person name="Kondo H."/>
            <person name="Sugawara M."/>
            <person name="Takahashi M."/>
            <person name="Kanda K."/>
            <person name="Yokoi T."/>
            <person name="Furuya T."/>
            <person name="Kikkawa E."/>
            <person name="Omura Y."/>
            <person name="Abe K."/>
            <person name="Kamihara K."/>
            <person name="Katsuta N."/>
            <person name="Sato K."/>
            <person name="Tanikawa M."/>
            <person name="Yamazaki M."/>
            <person name="Ninomiya K."/>
            <person name="Ishibashi T."/>
            <person name="Yamashita H."/>
            <person name="Murakawa K."/>
            <person name="Fujimori K."/>
            <person name="Tanai H."/>
            <person name="Kimata M."/>
            <person name="Watanabe M."/>
            <person name="Hiraoka S."/>
            <person name="Chiba Y."/>
            <person name="Ishida S."/>
            <person name="Ono Y."/>
            <person name="Takiguchi S."/>
            <person name="Watanabe S."/>
            <person name="Yosida M."/>
            <person name="Hotuta T."/>
            <person name="Kusano J."/>
            <person name="Kanehori K."/>
            <person name="Takahashi-Fujii A."/>
            <person name="Hara H."/>
            <person name="Tanase T.-O."/>
            <person name="Nomura Y."/>
            <person name="Togiya S."/>
            <person name="Komai F."/>
            <person name="Hara R."/>
            <person name="Takeuchi K."/>
            <person name="Arita M."/>
            <person name="Imose N."/>
            <person name="Musashino K."/>
            <person name="Yuuki H."/>
            <person name="Oshima A."/>
            <person name="Sasaki N."/>
            <person name="Aotsuka S."/>
            <person name="Yoshikawa Y."/>
            <person name="Matsunawa H."/>
            <person name="Ichihara T."/>
            <person name="Shiohata N."/>
            <person name="Sano S."/>
            <person name="Moriya S."/>
            <person name="Momiyama H."/>
            <person name="Satoh N."/>
            <person name="Takami S."/>
            <person name="Terashima Y."/>
            <person name="Suzuki O."/>
            <person name="Nakagawa S."/>
            <person name="Senoh A."/>
            <person name="Mizoguchi H."/>
            <person name="Goto Y."/>
            <person name="Shimizu F."/>
            <person name="Wakebe H."/>
            <person name="Hishigaki H."/>
            <person name="Watanabe T."/>
            <person name="Sugiyama A."/>
            <person name="Takemoto M."/>
            <person name="Kawakami B."/>
            <person name="Yamazaki M."/>
            <person name="Watanabe K."/>
            <person name="Kumagai A."/>
            <person name="Itakura S."/>
            <person name="Fukuzumi Y."/>
            <person name="Fujimori Y."/>
            <person name="Komiyama M."/>
            <person name="Tashiro H."/>
            <person name="Tanigami A."/>
            <person name="Fujiwara T."/>
            <person name="Ono T."/>
            <person name="Yamada K."/>
            <person name="Fujii Y."/>
            <person name="Ozaki K."/>
            <person name="Hirao M."/>
            <person name="Ohmori Y."/>
            <person name="Kawabata A."/>
            <person name="Hikiji T."/>
            <person name="Kobatake N."/>
            <person name="Inagaki H."/>
            <person name="Ikema Y."/>
            <person name="Okamoto S."/>
            <person name="Okitani R."/>
            <person name="Kawakami T."/>
            <person name="Noguchi S."/>
            <person name="Itoh T."/>
            <person name="Shigeta K."/>
            <person name="Senba T."/>
            <person name="Matsumura K."/>
            <person name="Nakajima Y."/>
            <person name="Mizuno T."/>
            <person name="Morinaga M."/>
            <person name="Sasaki M."/>
            <person name="Togashi T."/>
            <person name="Oyama M."/>
            <person name="Hata H."/>
            <person name="Watanabe M."/>
            <person name="Komatsu T."/>
            <person name="Mizushima-Sugano J."/>
            <person name="Satoh T."/>
            <person name="Shirai Y."/>
            <person name="Takahashi Y."/>
            <person name="Nakagawa K."/>
            <person name="Okumura K."/>
            <person name="Nagase T."/>
            <person name="Nomura N."/>
            <person name="Kikuchi H."/>
            <person name="Masuho Y."/>
            <person name="Yamashita R."/>
            <person name="Nakai K."/>
            <person name="Yada T."/>
            <person name="Nakamura Y."/>
            <person name="Ohara O."/>
            <person name="Isogai T."/>
            <person name="Sugano S."/>
        </authorList>
    </citation>
    <scope>NUCLEOTIDE SEQUENCE [LARGE SCALE MRNA] OF 1-954</scope>
    <scope>VARIANTS ARG-806 AND CYS-828</scope>
</reference>
<reference key="4">
    <citation type="journal article" date="2007" name="BMC Genomics">
        <title>The full-ORF clone resource of the German cDNA consortium.</title>
        <authorList>
            <person name="Bechtel S."/>
            <person name="Rosenfelder H."/>
            <person name="Duda A."/>
            <person name="Schmidt C.P."/>
            <person name="Ernst U."/>
            <person name="Wellenreuther R."/>
            <person name="Mehrle A."/>
            <person name="Schuster C."/>
            <person name="Bahr A."/>
            <person name="Bloecker H."/>
            <person name="Heubner D."/>
            <person name="Hoerlein A."/>
            <person name="Michel G."/>
            <person name="Wedler H."/>
            <person name="Koehrer K."/>
            <person name="Ottenwaelder B."/>
            <person name="Poustka A."/>
            <person name="Wiemann S."/>
            <person name="Schupp I."/>
        </authorList>
    </citation>
    <scope>NUCLEOTIDE SEQUENCE [LARGE SCALE MRNA] OF 494-1123</scope>
    <source>
        <tissue>Testis</tissue>
    </source>
</reference>
<reference key="5">
    <citation type="journal article" date="2002" name="Mol. Biol. Cell">
        <title>Functional proteomic analysis of human nucleolus.</title>
        <authorList>
            <person name="Scherl A."/>
            <person name="Coute Y."/>
            <person name="Deon C."/>
            <person name="Calle A."/>
            <person name="Kindbeiter K."/>
            <person name="Sanchez J.-C."/>
            <person name="Greco A."/>
            <person name="Hochstrasser D.F."/>
            <person name="Diaz J.-J."/>
        </authorList>
    </citation>
    <scope>SUBCELLULAR LOCATION [LARGE SCALE ANALYSIS]</scope>
    <source>
        <tissue>Cervix carcinoma</tissue>
    </source>
</reference>
<reference key="6">
    <citation type="journal article" date="2004" name="Biochem. Biophys. Res. Commun.">
        <title>Cloning and enzymatic analysis of 22 novel human ubiquitin-specific proteases.</title>
        <authorList>
            <person name="Quesada V."/>
            <person name="Diaz-Perales A."/>
            <person name="Gutierrez-Fernandez A."/>
            <person name="Garabaya C."/>
            <person name="Cal S."/>
            <person name="Lopez-Otin C."/>
        </authorList>
    </citation>
    <scope>TISSUE SPECIFICITY</scope>
    <scope>CATALYTIC ACTIVITY</scope>
</reference>
<reference key="7">
    <citation type="journal article" date="2006" name="Cell">
        <title>Global, in vivo, and site-specific phosphorylation dynamics in signaling networks.</title>
        <authorList>
            <person name="Olsen J.V."/>
            <person name="Blagoev B."/>
            <person name="Gnad F."/>
            <person name="Macek B."/>
            <person name="Kumar C."/>
            <person name="Mortensen P."/>
            <person name="Mann M."/>
        </authorList>
    </citation>
    <scope>PHOSPHORYLATION [LARGE SCALE ANALYSIS] AT SER-952</scope>
    <scope>IDENTIFICATION BY MASS SPECTROMETRY [LARGE SCALE ANALYSIS]</scope>
    <source>
        <tissue>Cervix carcinoma</tissue>
    </source>
</reference>
<reference key="8">
    <citation type="journal article" date="2008" name="Proc. Natl. Acad. Sci. U.S.A.">
        <title>A quantitative atlas of mitotic phosphorylation.</title>
        <authorList>
            <person name="Dephoure N."/>
            <person name="Zhou C."/>
            <person name="Villen J."/>
            <person name="Beausoleil S.A."/>
            <person name="Bakalarski C.E."/>
            <person name="Elledge S.J."/>
            <person name="Gygi S.P."/>
        </authorList>
    </citation>
    <scope>PHOSPHORYLATION [LARGE SCALE ANALYSIS] AT SER-464; SER-582 AND SER-667</scope>
    <scope>IDENTIFICATION BY MASS SPECTROMETRY [LARGE SCALE ANALYSIS]</scope>
    <source>
        <tissue>Cervix carcinoma</tissue>
    </source>
</reference>
<reference key="9">
    <citation type="journal article" date="2009" name="Anal. Chem.">
        <title>Lys-N and trypsin cover complementary parts of the phosphoproteome in a refined SCX-based approach.</title>
        <authorList>
            <person name="Gauci S."/>
            <person name="Helbig A.O."/>
            <person name="Slijper M."/>
            <person name="Krijgsveld J."/>
            <person name="Heck A.J."/>
            <person name="Mohammed S."/>
        </authorList>
    </citation>
    <scope>IDENTIFICATION BY MASS SPECTROMETRY [LARGE SCALE ANALYSIS]</scope>
</reference>
<reference key="10">
    <citation type="journal article" date="2009" name="J. Cell Sci.">
        <title>Nucleolar structure and function are regulated by the deubiquitylating enzyme USP36.</title>
        <authorList>
            <person name="Endo A."/>
            <person name="Matsumoto M."/>
            <person name="Inada T."/>
            <person name="Yamamoto A."/>
            <person name="Nakayama K.I."/>
            <person name="Kitamura N."/>
            <person name="Komada M."/>
        </authorList>
    </citation>
    <scope>FUNCTION</scope>
    <scope>SUBCELLULAR LOCATION</scope>
    <scope>MUTAGENESIS OF CYS-131</scope>
    <scope>ACTIVE SITE</scope>
</reference>
<reference key="11">
    <citation type="journal article" date="2009" name="Sci. Signal.">
        <title>Quantitative phosphoproteomic analysis of T cell receptor signaling reveals system-wide modulation of protein-protein interactions.</title>
        <authorList>
            <person name="Mayya V."/>
            <person name="Lundgren D.H."/>
            <person name="Hwang S.-I."/>
            <person name="Rezaul K."/>
            <person name="Wu L."/>
            <person name="Eng J.K."/>
            <person name="Rodionov V."/>
            <person name="Han D.K."/>
        </authorList>
    </citation>
    <scope>PHOSPHORYLATION [LARGE SCALE ANALYSIS] AT SER-667 AND SER-682</scope>
    <scope>IDENTIFICATION BY MASS SPECTROMETRY [LARGE SCALE ANALYSIS]</scope>
    <source>
        <tissue>Leukemic T-cell</tissue>
    </source>
</reference>
<reference key="12">
    <citation type="journal article" date="2010" name="Sci. Signal.">
        <title>Quantitative phosphoproteomics reveals widespread full phosphorylation site occupancy during mitosis.</title>
        <authorList>
            <person name="Olsen J.V."/>
            <person name="Vermeulen M."/>
            <person name="Santamaria A."/>
            <person name="Kumar C."/>
            <person name="Miller M.L."/>
            <person name="Jensen L.J."/>
            <person name="Gnad F."/>
            <person name="Cox J."/>
            <person name="Jensen T.S."/>
            <person name="Nigg E.A."/>
            <person name="Brunak S."/>
            <person name="Mann M."/>
        </authorList>
    </citation>
    <scope>PHOSPHORYLATION [LARGE SCALE ANALYSIS] AT SER-582; SER-713; SER-742 AND SER-952</scope>
    <scope>IDENTIFICATION BY MASS SPECTROMETRY [LARGE SCALE ANALYSIS]</scope>
    <source>
        <tissue>Cervix carcinoma</tissue>
    </source>
</reference>
<reference key="13">
    <citation type="journal article" date="2011" name="J. Cell. Biochem.">
        <title>Protein stability of mitochondrial superoxide dismutase SOD2 is regulated by USP36.</title>
        <authorList>
            <person name="Kim M.S."/>
            <person name="Ramakrishna S."/>
            <person name="Lim K.H."/>
            <person name="Kim J.H."/>
            <person name="Baek K.H."/>
        </authorList>
    </citation>
    <scope>FUNCTION</scope>
    <scope>ACTIVE SITE</scope>
    <scope>MUTAGENESIS OF CYS-131</scope>
</reference>
<reference key="14">
    <citation type="journal article" date="2011" name="Sci. Signal.">
        <title>System-wide temporal characterization of the proteome and phosphoproteome of human embryonic stem cell differentiation.</title>
        <authorList>
            <person name="Rigbolt K.T."/>
            <person name="Prokhorova T.A."/>
            <person name="Akimov V."/>
            <person name="Henningsen J."/>
            <person name="Johansen P.T."/>
            <person name="Kratchmarova I."/>
            <person name="Kassem M."/>
            <person name="Mann M."/>
            <person name="Olsen J.V."/>
            <person name="Blagoev B."/>
        </authorList>
    </citation>
    <scope>PHOSPHORYLATION [LARGE SCALE ANALYSIS] AT SER-742</scope>
    <scope>IDENTIFICATION BY MASS SPECTROMETRY [LARGE SCALE ANALYSIS]</scope>
</reference>
<reference key="15">
    <citation type="journal article" date="2012" name="Autophagy">
        <title>The deubiquitinating enzyme USP36 controls selective autophagy activation by ubiquitinated proteins.</title>
        <authorList>
            <person name="Taillebourg E."/>
            <person name="Gregoire I."/>
            <person name="Viargues P."/>
            <person name="Jacomin A.C."/>
            <person name="Thevenon D."/>
            <person name="Faure M."/>
            <person name="Fauvarque M.O."/>
        </authorList>
    </citation>
    <scope>FUNCTION</scope>
</reference>
<reference key="16">
    <citation type="journal article" date="2012" name="Cell Rep.">
        <title>A conserved deubiquitinating enzyme controls cell growth by regulating RNA polymerase I stability.</title>
        <authorList>
            <person name="Richardson L.A."/>
            <person name="Reed B.J."/>
            <person name="Charette J.M."/>
            <person name="Freed E.F."/>
            <person name="Fredrickson E.K."/>
            <person name="Locke M.N."/>
            <person name="Baserga S.J."/>
            <person name="Gardner R.G."/>
        </authorList>
    </citation>
    <scope>FUNCTION</scope>
</reference>
<reference key="17">
    <citation type="journal article" date="2013" name="J. Proteome Res.">
        <title>Toward a comprehensive characterization of a human cancer cell phosphoproteome.</title>
        <authorList>
            <person name="Zhou H."/>
            <person name="Di Palma S."/>
            <person name="Preisinger C."/>
            <person name="Peng M."/>
            <person name="Polat A.N."/>
            <person name="Heck A.J."/>
            <person name="Mohammed S."/>
        </authorList>
    </citation>
    <scope>PHOSPHORYLATION [LARGE SCALE ANALYSIS] AT SER-429; SER-464; SER-546; SER-582; SER-667; SER-682; SER-713 AND SER-952</scope>
    <scope>IDENTIFICATION BY MASS SPECTROMETRY [LARGE SCALE ANALYSIS]</scope>
    <source>
        <tissue>Cervix carcinoma</tissue>
        <tissue>Erythroleukemia</tissue>
    </source>
</reference>
<reference key="18">
    <citation type="journal article" date="2015" name="Proc. Natl. Acad. Sci. U.S.A.">
        <title>The nucleolar ubiquitin-specific protease USP36 deubiquitinates and stabilizes c-Myc.</title>
        <authorList>
            <person name="Sun X.X."/>
            <person name="He X."/>
            <person name="Yin L."/>
            <person name="Komada M."/>
            <person name="Sears R.C."/>
            <person name="Dai M.S."/>
        </authorList>
    </citation>
    <scope>FUNCTION</scope>
    <scope>SUBCELLULAR LOCATION</scope>
    <scope>ACTIVE SITE</scope>
    <scope>MUTAGENESIS OF CYS-131</scope>
</reference>
<reference key="19">
    <citation type="journal article" date="2016" name="J. Biol. Chem.">
        <title>Ubiquitin-specific Protease 36 (USP36) Controls Neuronal Precursor Cell-expressed Developmentally Down-regulated 4-2 (Nedd4-2) Actions over the Neurotrophin Receptor TrkA and Potassium Voltage-gated Channels 7.2/3 (Kv7.2/3).</title>
        <authorList>
            <person name="Anta B."/>
            <person name="Martin-Rodriguez C."/>
            <person name="Gomis-Perez C."/>
            <person name="Calvo L."/>
            <person name="Lopez-Benito S."/>
            <person name="Calderon-Garcia A.A."/>
            <person name="Vicente-Garcia C."/>
            <person name="Villarroel A."/>
            <person name="Arevalo J.C."/>
        </authorList>
    </citation>
    <scope>FUNCTION</scope>
    <scope>SUBCELLULAR LOCATION</scope>
    <scope>ACTIVE SITE</scope>
    <scope>INTERACTION WITH NEDD4L AND NTRK1</scope>
    <scope>MUTAGENESIS OF CYS-131</scope>
    <scope>UBIQUITINATION</scope>
</reference>
<reference key="20">
    <citation type="journal article" date="2018" name="Biochem. Biophys. Res. Commun.">
        <title>The ubiquitin-specific protease USP36 is a conserved histone H2B deubiquitinase.</title>
        <authorList>
            <person name="DeVine T."/>
            <person name="Sears R.C."/>
            <person name="Dai M.S."/>
        </authorList>
    </citation>
    <scope>FUNCTION</scope>
    <scope>ACTIVE SITE</scope>
    <scope>MUTAGENESIS OF CYS-131</scope>
</reference>
<reference key="21">
    <citation type="journal article" date="2018" name="J. Biol. Chem.">
        <title>Loss of the deubiquitinase USP36 destabilizes the RNA helicase DHX33 and causes preimplantation lethality in mice.</title>
        <authorList>
            <person name="Fraile J.M."/>
            <person name="Campos-Iglesias D."/>
            <person name="Rodriguez F."/>
            <person name="Astudillo A."/>
            <person name="Vilarrasa-Blasi R."/>
            <person name="Verdaguer-Dot N."/>
            <person name="Prado M.A."/>
            <person name="Paulo J.A."/>
            <person name="Gygi S.P."/>
            <person name="Martin-Subero J.I."/>
            <person name="Freije J.M.P."/>
            <person name="Lopez-Otin C."/>
        </authorList>
    </citation>
    <scope>FUNCTION</scope>
</reference>
<reference key="22">
    <citation type="journal article" date="2022" name="Oncogene">
        <title>CEP63 upregulates YAP1 to promote colorectal cancer progression through stabilizing RNA binding protein FXR1.</title>
        <authorList>
            <person name="Ling H."/>
            <person name="Cao C.H."/>
            <person name="Han K."/>
            <person name="Lv Y.R."/>
            <person name="Ma X.D."/>
            <person name="Cao J.H."/>
            <person name="Chen J.W."/>
            <person name="Li S."/>
            <person name="Lin J.L."/>
            <person name="Fang Y.J."/>
            <person name="Pan Z.Z."/>
            <person name="Xie D."/>
            <person name="Wang F.W."/>
        </authorList>
    </citation>
    <scope>FUNCTION</scope>
    <scope>CATALYTIC ACTIVITY</scope>
</reference>
<reference evidence="20" key="23">
    <citation type="journal article" date="2023" name="Nucleic Acids Res.">
        <title>The ubiquitin-specific protease USP36 SUMOylates EXOSC10 and promotes the nucleolar RNA exosome function in rRNA processing.</title>
        <authorList>
            <person name="Chen Y."/>
            <person name="Li Y."/>
            <person name="Dai R.S."/>
            <person name="Savage J.C."/>
            <person name="Shinde U."/>
            <person name="Klimek J."/>
            <person name="David L.L."/>
            <person name="Young E.A."/>
            <person name="Hafner M."/>
            <person name="Sears R.C."/>
            <person name="Sun X.X."/>
            <person name="Dai M.S."/>
        </authorList>
    </citation>
    <scope>FUNCTION</scope>
    <scope>CATALYTIC ACTIVITY</scope>
    <scope>INTERACTION WITH EXOSC10</scope>
    <scope>SUBCELLULAR LOCATION</scope>
    <scope>INDUCTION</scope>
    <scope>MUTAGENESIS OF CYS-131</scope>
</reference>
<evidence type="ECO:0000255" key="1">
    <source>
        <dbReference type="PROSITE-ProRule" id="PRU10092"/>
    </source>
</evidence>
<evidence type="ECO:0000255" key="2">
    <source>
        <dbReference type="PROSITE-ProRule" id="PRU10093"/>
    </source>
</evidence>
<evidence type="ECO:0000256" key="3">
    <source>
        <dbReference type="SAM" id="MobiDB-lite"/>
    </source>
</evidence>
<evidence type="ECO:0000269" key="4">
    <source>
    </source>
</evidence>
<evidence type="ECO:0000269" key="5">
    <source>
    </source>
</evidence>
<evidence type="ECO:0000269" key="6">
    <source>
    </source>
</evidence>
<evidence type="ECO:0000269" key="7">
    <source>
    </source>
</evidence>
<evidence type="ECO:0000269" key="8">
    <source>
    </source>
</evidence>
<evidence type="ECO:0000269" key="9">
    <source>
    </source>
</evidence>
<evidence type="ECO:0000269" key="10">
    <source>
    </source>
</evidence>
<evidence type="ECO:0000269" key="11">
    <source>
    </source>
</evidence>
<evidence type="ECO:0000269" key="12">
    <source>
    </source>
</evidence>
<evidence type="ECO:0000269" key="13">
    <source>
    </source>
</evidence>
<evidence type="ECO:0000269" key="14">
    <source>
    </source>
</evidence>
<evidence type="ECO:0000269" key="15">
    <source>
    </source>
</evidence>
<evidence type="ECO:0000269" key="16">
    <source>
    </source>
</evidence>
<evidence type="ECO:0000269" key="17">
    <source>
    </source>
</evidence>
<evidence type="ECO:0000269" key="18">
    <source>
    </source>
</evidence>
<evidence type="ECO:0000303" key="19">
    <source>
    </source>
</evidence>
<evidence type="ECO:0000305" key="20"/>
<evidence type="ECO:0000312" key="21">
    <source>
        <dbReference type="HGNC" id="HGNC:20062"/>
    </source>
</evidence>
<evidence type="ECO:0007744" key="22">
    <source>
    </source>
</evidence>
<evidence type="ECO:0007744" key="23">
    <source>
    </source>
</evidence>
<evidence type="ECO:0007744" key="24">
    <source>
    </source>
</evidence>
<evidence type="ECO:0007744" key="25">
    <source>
    </source>
</evidence>
<evidence type="ECO:0007744" key="26">
    <source>
    </source>
</evidence>
<evidence type="ECO:0007744" key="27">
    <source>
    </source>
</evidence>
<evidence type="ECO:0007829" key="28">
    <source>
        <dbReference type="PDB" id="8BS9"/>
    </source>
</evidence>
<feature type="chain" id="PRO_0000080666" description="Ubiquitin carboxyl-terminal hydrolase 36">
    <location>
        <begin position="1"/>
        <end position="1123"/>
    </location>
</feature>
<feature type="domain" description="USP">
    <location>
        <begin position="122"/>
        <end position="423"/>
    </location>
</feature>
<feature type="region of interest" description="Disordered" evidence="3">
    <location>
        <begin position="1"/>
        <end position="22"/>
    </location>
</feature>
<feature type="region of interest" description="Disordered" evidence="3">
    <location>
        <begin position="67"/>
        <end position="95"/>
    </location>
</feature>
<feature type="region of interest" description="Disordered" evidence="3">
    <location>
        <begin position="430"/>
        <end position="577"/>
    </location>
</feature>
<feature type="region of interest" description="Disordered" evidence="3">
    <location>
        <begin position="589"/>
        <end position="999"/>
    </location>
</feature>
<feature type="compositionally biased region" description="Basic and acidic residues" evidence="3">
    <location>
        <begin position="1"/>
        <end position="19"/>
    </location>
</feature>
<feature type="compositionally biased region" description="Basic and acidic residues" evidence="3">
    <location>
        <begin position="69"/>
        <end position="90"/>
    </location>
</feature>
<feature type="compositionally biased region" description="Polar residues" evidence="3">
    <location>
        <begin position="491"/>
        <end position="503"/>
    </location>
</feature>
<feature type="compositionally biased region" description="Low complexity" evidence="3">
    <location>
        <begin position="510"/>
        <end position="519"/>
    </location>
</feature>
<feature type="compositionally biased region" description="Low complexity" evidence="3">
    <location>
        <begin position="557"/>
        <end position="571"/>
    </location>
</feature>
<feature type="compositionally biased region" description="Basic and acidic residues" evidence="3">
    <location>
        <begin position="597"/>
        <end position="609"/>
    </location>
</feature>
<feature type="compositionally biased region" description="Low complexity" evidence="3">
    <location>
        <begin position="610"/>
        <end position="623"/>
    </location>
</feature>
<feature type="compositionally biased region" description="Polar residues" evidence="3">
    <location>
        <begin position="640"/>
        <end position="654"/>
    </location>
</feature>
<feature type="compositionally biased region" description="Polar residues" evidence="3">
    <location>
        <begin position="669"/>
        <end position="681"/>
    </location>
</feature>
<feature type="compositionally biased region" description="Low complexity" evidence="3">
    <location>
        <begin position="687"/>
        <end position="697"/>
    </location>
</feature>
<feature type="compositionally biased region" description="Polar residues" evidence="3">
    <location>
        <begin position="773"/>
        <end position="785"/>
    </location>
</feature>
<feature type="compositionally biased region" description="Basic residues" evidence="3">
    <location>
        <begin position="841"/>
        <end position="850"/>
    </location>
</feature>
<feature type="compositionally biased region" description="Polar residues" evidence="3">
    <location>
        <begin position="891"/>
        <end position="902"/>
    </location>
</feature>
<feature type="compositionally biased region" description="Basic and acidic residues" evidence="3">
    <location>
        <begin position="963"/>
        <end position="975"/>
    </location>
</feature>
<feature type="active site" description="Nucleophile" evidence="1 2 9 10 13 14 16">
    <location>
        <position position="131"/>
    </location>
</feature>
<feature type="active site" description="Proton acceptor" evidence="1 2">
    <location>
        <position position="382"/>
    </location>
</feature>
<feature type="modified residue" description="Phosphoserine" evidence="27">
    <location>
        <position position="429"/>
    </location>
</feature>
<feature type="modified residue" description="Phosphoserine" evidence="23 27">
    <location>
        <position position="464"/>
    </location>
</feature>
<feature type="modified residue" description="Phosphoserine" evidence="27">
    <location>
        <position position="546"/>
    </location>
</feature>
<feature type="modified residue" description="Phosphoserine" evidence="23 25 27">
    <location>
        <position position="582"/>
    </location>
</feature>
<feature type="modified residue" description="Phosphoserine" evidence="23 24 27">
    <location>
        <position position="667"/>
    </location>
</feature>
<feature type="modified residue" description="Phosphoserine" evidence="24 27">
    <location>
        <position position="682"/>
    </location>
</feature>
<feature type="modified residue" description="Phosphoserine" evidence="25 27">
    <location>
        <position position="713"/>
    </location>
</feature>
<feature type="modified residue" description="Phosphoserine" evidence="25 26">
    <location>
        <position position="742"/>
    </location>
</feature>
<feature type="modified residue" description="Phosphoserine" evidence="22 25 27">
    <location>
        <position position="952"/>
    </location>
</feature>
<feature type="sequence variant" id="VAR_037277" description="In dbSNP:rs3744793." evidence="8">
    <original>V</original>
    <variation>I</variation>
    <location>
        <position position="271"/>
    </location>
</feature>
<feature type="sequence variant" id="VAR_037278" description="In dbSNP:rs3744795.">
    <original>I</original>
    <variation>M</variation>
    <location>
        <position position="489"/>
    </location>
</feature>
<feature type="sequence variant" id="VAR_037279" description="In dbSNP:rs9889908.">
    <original>R</original>
    <variation>Q</variation>
    <location>
        <position position="775"/>
    </location>
</feature>
<feature type="sequence variant" id="VAR_037280" description="In dbSNP:rs3088040." evidence="4 6 8">
    <original>Q</original>
    <variation>R</variation>
    <location>
        <position position="806"/>
    </location>
</feature>
<feature type="sequence variant" id="VAR_037281" description="In dbSNP:rs3744797.">
    <original>K</original>
    <variation>N</variation>
    <location>
        <position position="814"/>
    </location>
</feature>
<feature type="sequence variant" id="VAR_037282" description="In dbSNP:rs1057040." evidence="4 6">
    <original>R</original>
    <variation>C</variation>
    <location>
        <position position="828"/>
    </location>
</feature>
<feature type="sequence variant" id="VAR_058034" description="In dbSNP:rs61760231." evidence="8">
    <original>R</original>
    <variation>P</variation>
    <location>
        <position position="887"/>
    </location>
</feature>
<feature type="sequence variant" id="VAR_080193" description="In dbSNP:rs866027510." evidence="4">
    <location>
        <begin position="959"/>
        <end position="960"/>
    </location>
</feature>
<feature type="mutagenesis site" description="Abolishes deubiquitinase activity. No effect on NTRK1 ubiquitination levels." evidence="9 10 13 14 16 18">
    <original>C</original>
    <variation>A</variation>
    <variation>S</variation>
    <location>
        <position position="131"/>
    </location>
</feature>
<feature type="sequence conflict" description="In Ref. 2; AAH71582." evidence="20" ref="2">
    <original>R</original>
    <variation>G</variation>
    <location>
        <position position="82"/>
    </location>
</feature>
<feature type="sequence conflict" description="In Ref. 3; BAA91825." evidence="20" ref="3">
    <original>D</original>
    <variation>G</variation>
    <location>
        <position position="573"/>
    </location>
</feature>
<feature type="strand" evidence="28">
    <location>
        <begin position="127"/>
        <end position="129"/>
    </location>
</feature>
<feature type="helix" evidence="28">
    <location>
        <begin position="131"/>
        <end position="141"/>
    </location>
</feature>
<feature type="helix" evidence="28">
    <location>
        <begin position="144"/>
        <end position="151"/>
    </location>
</feature>
<feature type="turn" evidence="28">
    <location>
        <begin position="152"/>
        <end position="158"/>
    </location>
</feature>
<feature type="helix" evidence="28">
    <location>
        <begin position="166"/>
        <end position="178"/>
    </location>
</feature>
<feature type="turn" evidence="28">
    <location>
        <begin position="179"/>
        <end position="182"/>
    </location>
</feature>
<feature type="strand" evidence="28">
    <location>
        <begin position="183"/>
        <end position="185"/>
    </location>
</feature>
<feature type="helix" evidence="28">
    <location>
        <begin position="188"/>
        <end position="192"/>
    </location>
</feature>
<feature type="helix" evidence="28">
    <location>
        <begin position="194"/>
        <end position="197"/>
    </location>
</feature>
<feature type="helix" evidence="28">
    <location>
        <begin position="209"/>
        <end position="225"/>
    </location>
</feature>
<feature type="helix" evidence="28">
    <location>
        <begin position="233"/>
        <end position="236"/>
    </location>
</feature>
<feature type="helix" evidence="28">
    <location>
        <begin position="240"/>
        <end position="245"/>
    </location>
</feature>
<feature type="strand" evidence="28">
    <location>
        <begin position="247"/>
        <end position="255"/>
    </location>
</feature>
<feature type="turn" evidence="28">
    <location>
        <begin position="256"/>
        <end position="258"/>
    </location>
</feature>
<feature type="strand" evidence="28">
    <location>
        <begin position="261"/>
        <end position="269"/>
    </location>
</feature>
<feature type="strand" evidence="28">
    <location>
        <begin position="271"/>
        <end position="274"/>
    </location>
</feature>
<feature type="helix" evidence="28">
    <location>
        <begin position="281"/>
        <end position="288"/>
    </location>
</feature>
<feature type="strand" evidence="28">
    <location>
        <begin position="292"/>
        <end position="294"/>
    </location>
</feature>
<feature type="helix" evidence="28">
    <location>
        <begin position="296"/>
        <end position="298"/>
    </location>
</feature>
<feature type="strand" evidence="28">
    <location>
        <begin position="300"/>
        <end position="302"/>
    </location>
</feature>
<feature type="turn" evidence="28">
    <location>
        <begin position="303"/>
        <end position="306"/>
    </location>
</feature>
<feature type="strand" evidence="28">
    <location>
        <begin position="307"/>
        <end position="309"/>
    </location>
</feature>
<feature type="strand" evidence="28">
    <location>
        <begin position="311"/>
        <end position="319"/>
    </location>
</feature>
<feature type="strand" evidence="28">
    <location>
        <begin position="322"/>
        <end position="329"/>
    </location>
</feature>
<feature type="strand" evidence="28">
    <location>
        <begin position="334"/>
        <end position="338"/>
    </location>
</feature>
<feature type="strand" evidence="28">
    <location>
        <begin position="347"/>
        <end position="350"/>
    </location>
</feature>
<feature type="helix" evidence="28">
    <location>
        <begin position="352"/>
        <end position="354"/>
    </location>
</feature>
<feature type="strand" evidence="28">
    <location>
        <begin position="355"/>
        <end position="357"/>
    </location>
</feature>
<feature type="strand" evidence="28">
    <location>
        <begin position="359"/>
        <end position="361"/>
    </location>
</feature>
<feature type="strand" evidence="28">
    <location>
        <begin position="364"/>
        <end position="380"/>
    </location>
</feature>
<feature type="strand" evidence="28">
    <location>
        <begin position="382"/>
        <end position="388"/>
    </location>
</feature>
<feature type="strand" evidence="28">
    <location>
        <begin position="394"/>
        <end position="398"/>
    </location>
</feature>
<feature type="strand" evidence="28">
    <location>
        <begin position="401"/>
        <end position="404"/>
    </location>
</feature>
<feature type="helix" evidence="28">
    <location>
        <begin position="407"/>
        <end position="410"/>
    </location>
</feature>
<feature type="strand" evidence="28">
    <location>
        <begin position="415"/>
        <end position="422"/>
    </location>
</feature>
<sequence length="1123" mass="122908">MPIVDKLKEALKPGRKDSADDGELGKLLASSAKKVLLQKIEFEPASKSFSYQLEALKSKYVLLNPKTEGASRHKSGDDPPARRQGSEHTYESCGDGVPAPQKVLFPTERLSLRWERVFRVGAGLHNLGNTCFLNATIQCLTYTPPLANYLLSKEHARSCHQGSFCMLCVMQNHIVQAFANSGNAIKPVSFIRDLKKIARHFRFGNQEDAHEFLRYTIDAMQKACLNGCAKLDRQTQATTLVHQIFGGYLRSRVKCSVCKSVSDTYDPYLDVALEIRQAANIVRALELFVKADVLSGENAYMCAKCKKKVPASKRFTIHRTSNVLTLSLKRFANFSGGKITKDVGYPEFLNIRPYMSQNNGDPVMYGLYAVLVHSGYSCHAGHYYCYVKASNGQWYQMNDSLVHSSNVKVVLNQQAYVLFYLRIPGSKKSPEGLISRTGSSSLPGRPSVIPDHSKKNIGNGIISSPLTGKRQDSGTMKKPHTTEEIGVPISRNGSTLGLKSQNGCIPPKLPSGSPSPKLSQTPTHMPTILDDPGKKVKKPAPPQHFSPRTAQGLPGTSNSNSSRSGSQRQGSWDSRDVVLSTSPKLLATATANGHGLKGNDESAGLDRRGSSSSSPEHSASSDSTKAPQTPRSGAAHLCDSQETNCSTAGHSKTPPSGADSKTVKLKSPVLSNTTTEPASTMSPPPAKKLALSAKKASTLWRATGNDLRPPPPSPSSDLTHPMKTSHPVVASTWPVHRARAVSPAPQSSSRLQPPFSPHPTLLSSTPKPPGTSEPRSCSSISTALPQVNEDLVSLPHQLPEASEPPQSPSEKRKKTFVGEPQRLGSETRLPQHIREATAAPHGKRKRKKKKRPEDTAASALQEGQTQRQPGSPMYRREGQAQLPAVRRQEDGTQPQVNGQQVGCVTDGHHASSRKRRRKGAEGLGEEGGLHQDPLRHSCSPMGDGDPEAMEESPRKKKKKKRKQETQRAVEEDGHLKCPRSAKPQDAVVPESSSCAPSANGWCPGDRMGLSQAPPVSWNGERESDVVQELLKYSSDKAYGRKVLTWDGKMSAVSQDAIEDSRQARTETVVDDWDEEFDRGKEKKIKKFKREKRRNFNAFQKLQTRRNFWSVTHPAKAASLSYRR</sequence>
<accession>Q9P275</accession>
<accession>Q05C98</accession>
<accession>Q05DD0</accession>
<accession>Q6IQ38</accession>
<accession>Q8NDM8</accession>
<accession>Q9NVC8</accession>
<keyword id="KW-0002">3D-structure</keyword>
<keyword id="KW-0963">Cytoplasm</keyword>
<keyword id="KW-0378">Hydrolase</keyword>
<keyword id="KW-0539">Nucleus</keyword>
<keyword id="KW-0597">Phosphoprotein</keyword>
<keyword id="KW-0645">Protease</keyword>
<keyword id="KW-1267">Proteomics identification</keyword>
<keyword id="KW-1185">Reference proteome</keyword>
<keyword id="KW-0694">RNA-binding</keyword>
<keyword id="KW-0788">Thiol protease</keyword>
<keyword id="KW-0808">Transferase</keyword>
<keyword id="KW-0832">Ubl conjugation</keyword>
<keyword id="KW-0833">Ubl conjugation pathway</keyword>